<dbReference type="EC" id="2.7.8.7" evidence="1"/>
<dbReference type="EMBL" id="CP001635">
    <property type="protein sequence ID" value="ACS18057.1"/>
    <property type="molecule type" value="Genomic_DNA"/>
</dbReference>
<dbReference type="SMR" id="C5CSF9"/>
<dbReference type="STRING" id="543728.Vapar_1406"/>
<dbReference type="KEGG" id="vap:Vapar_1406"/>
<dbReference type="eggNOG" id="COG0736">
    <property type="taxonomic scope" value="Bacteria"/>
</dbReference>
<dbReference type="HOGENOM" id="CLU_089696_3_1_4"/>
<dbReference type="OrthoDB" id="517356at2"/>
<dbReference type="GO" id="GO:0005737">
    <property type="term" value="C:cytoplasm"/>
    <property type="evidence" value="ECO:0007669"/>
    <property type="project" value="UniProtKB-SubCell"/>
</dbReference>
<dbReference type="GO" id="GO:0008897">
    <property type="term" value="F:holo-[acyl-carrier-protein] synthase activity"/>
    <property type="evidence" value="ECO:0007669"/>
    <property type="project" value="UniProtKB-UniRule"/>
</dbReference>
<dbReference type="GO" id="GO:0000287">
    <property type="term" value="F:magnesium ion binding"/>
    <property type="evidence" value="ECO:0007669"/>
    <property type="project" value="UniProtKB-UniRule"/>
</dbReference>
<dbReference type="GO" id="GO:0006633">
    <property type="term" value="P:fatty acid biosynthetic process"/>
    <property type="evidence" value="ECO:0007669"/>
    <property type="project" value="UniProtKB-UniRule"/>
</dbReference>
<dbReference type="Gene3D" id="3.90.470.20">
    <property type="entry name" value="4'-phosphopantetheinyl transferase domain"/>
    <property type="match status" value="1"/>
</dbReference>
<dbReference type="HAMAP" id="MF_00101">
    <property type="entry name" value="AcpS"/>
    <property type="match status" value="1"/>
</dbReference>
<dbReference type="InterPro" id="IPR008278">
    <property type="entry name" value="4-PPantetheinyl_Trfase_dom"/>
</dbReference>
<dbReference type="InterPro" id="IPR037143">
    <property type="entry name" value="4-PPantetheinyl_Trfase_dom_sf"/>
</dbReference>
<dbReference type="InterPro" id="IPR002582">
    <property type="entry name" value="ACPS"/>
</dbReference>
<dbReference type="InterPro" id="IPR004568">
    <property type="entry name" value="Ppantetheine-prot_Trfase_dom"/>
</dbReference>
<dbReference type="NCBIfam" id="TIGR00516">
    <property type="entry name" value="acpS"/>
    <property type="match status" value="1"/>
</dbReference>
<dbReference type="NCBIfam" id="TIGR00556">
    <property type="entry name" value="pantethn_trn"/>
    <property type="match status" value="1"/>
</dbReference>
<dbReference type="Pfam" id="PF01648">
    <property type="entry name" value="ACPS"/>
    <property type="match status" value="1"/>
</dbReference>
<dbReference type="SUPFAM" id="SSF56214">
    <property type="entry name" value="4'-phosphopantetheinyl transferase"/>
    <property type="match status" value="1"/>
</dbReference>
<sequence>MIYGIGTDICDLRRIAATFERQGERFAHRVLSDAEFAVWKARSERWPKRGLSYLATRFSAKEAFSKAIGLGMRMPMSWRLCEIANLRSGKPVIVLHGELKEWFEARGLTAHVTVTDETEYAASFVVVEKL</sequence>
<name>ACPS_VARPS</name>
<proteinExistence type="inferred from homology"/>
<evidence type="ECO:0000255" key="1">
    <source>
        <dbReference type="HAMAP-Rule" id="MF_00101"/>
    </source>
</evidence>
<gene>
    <name evidence="1" type="primary">acpS</name>
    <name type="ordered locus">Vapar_1406</name>
</gene>
<comment type="function">
    <text evidence="1">Transfers the 4'-phosphopantetheine moiety from coenzyme A to a Ser of acyl-carrier-protein.</text>
</comment>
<comment type="catalytic activity">
    <reaction evidence="1">
        <text>apo-[ACP] + CoA = holo-[ACP] + adenosine 3',5'-bisphosphate + H(+)</text>
        <dbReference type="Rhea" id="RHEA:12068"/>
        <dbReference type="Rhea" id="RHEA-COMP:9685"/>
        <dbReference type="Rhea" id="RHEA-COMP:9690"/>
        <dbReference type="ChEBI" id="CHEBI:15378"/>
        <dbReference type="ChEBI" id="CHEBI:29999"/>
        <dbReference type="ChEBI" id="CHEBI:57287"/>
        <dbReference type="ChEBI" id="CHEBI:58343"/>
        <dbReference type="ChEBI" id="CHEBI:64479"/>
        <dbReference type="EC" id="2.7.8.7"/>
    </reaction>
</comment>
<comment type="cofactor">
    <cofactor evidence="1">
        <name>Mg(2+)</name>
        <dbReference type="ChEBI" id="CHEBI:18420"/>
    </cofactor>
</comment>
<comment type="subcellular location">
    <subcellularLocation>
        <location evidence="1">Cytoplasm</location>
    </subcellularLocation>
</comment>
<comment type="similarity">
    <text evidence="1">Belongs to the P-Pant transferase superfamily. AcpS family.</text>
</comment>
<keyword id="KW-0963">Cytoplasm</keyword>
<keyword id="KW-0275">Fatty acid biosynthesis</keyword>
<keyword id="KW-0276">Fatty acid metabolism</keyword>
<keyword id="KW-0444">Lipid biosynthesis</keyword>
<keyword id="KW-0443">Lipid metabolism</keyword>
<keyword id="KW-0460">Magnesium</keyword>
<keyword id="KW-0479">Metal-binding</keyword>
<keyword id="KW-0808">Transferase</keyword>
<reference key="1">
    <citation type="journal article" date="2011" name="J. Bacteriol.">
        <title>Complete genome sequence of the metabolically versatile plant growth-promoting endophyte, Variovorax paradoxus S110.</title>
        <authorList>
            <person name="Han J.I."/>
            <person name="Choi H.K."/>
            <person name="Lee S.W."/>
            <person name="Orwin P.M."/>
            <person name="Kim J."/>
            <person name="Laroe S.L."/>
            <person name="Kim T.G."/>
            <person name="O'Neil J."/>
            <person name="Leadbetter J.R."/>
            <person name="Lee S.Y."/>
            <person name="Hur C.G."/>
            <person name="Spain J.C."/>
            <person name="Ovchinnikova G."/>
            <person name="Goodwin L."/>
            <person name="Han C."/>
        </authorList>
    </citation>
    <scope>NUCLEOTIDE SEQUENCE [LARGE SCALE GENOMIC DNA]</scope>
    <source>
        <strain>S110</strain>
    </source>
</reference>
<protein>
    <recommendedName>
        <fullName evidence="1">Holo-[acyl-carrier-protein] synthase</fullName>
        <shortName evidence="1">Holo-ACP synthase</shortName>
        <ecNumber evidence="1">2.7.8.7</ecNumber>
    </recommendedName>
    <alternativeName>
        <fullName evidence="1">4'-phosphopantetheinyl transferase AcpS</fullName>
    </alternativeName>
</protein>
<feature type="chain" id="PRO_1000202806" description="Holo-[acyl-carrier-protein] synthase">
    <location>
        <begin position="1"/>
        <end position="130"/>
    </location>
</feature>
<feature type="binding site" evidence="1">
    <location>
        <position position="8"/>
    </location>
    <ligand>
        <name>Mg(2+)</name>
        <dbReference type="ChEBI" id="CHEBI:18420"/>
    </ligand>
</feature>
<feature type="binding site" evidence="1">
    <location>
        <position position="62"/>
    </location>
    <ligand>
        <name>Mg(2+)</name>
        <dbReference type="ChEBI" id="CHEBI:18420"/>
    </ligand>
</feature>
<organism>
    <name type="scientific">Variovorax paradoxus (strain S110)</name>
    <dbReference type="NCBI Taxonomy" id="543728"/>
    <lineage>
        <taxon>Bacteria</taxon>
        <taxon>Pseudomonadati</taxon>
        <taxon>Pseudomonadota</taxon>
        <taxon>Betaproteobacteria</taxon>
        <taxon>Burkholderiales</taxon>
        <taxon>Comamonadaceae</taxon>
        <taxon>Variovorax</taxon>
    </lineage>
</organism>
<accession>C5CSF9</accession>